<keyword id="KW-1185">Reference proteome</keyword>
<organism>
    <name type="scientific">Psittacid herpesvirus 1 (isolate Amazon parrot/-/97-0001/1997)</name>
    <name type="common">PsHV-1</name>
    <name type="synonym">Pacheco's disease virus</name>
    <dbReference type="NCBI Taxonomy" id="670426"/>
    <lineage>
        <taxon>Viruses</taxon>
        <taxon>Duplodnaviria</taxon>
        <taxon>Heunggongvirae</taxon>
        <taxon>Peploviricota</taxon>
        <taxon>Herviviricetes</taxon>
        <taxon>Herpesvirales</taxon>
        <taxon>Orthoherpesviridae</taxon>
        <taxon>Alphaherpesvirinae</taxon>
        <taxon>Iltovirus</taxon>
        <taxon>Iltovirus psittacidalpha1</taxon>
        <taxon>Psittacid alphaherpesvirus 1</taxon>
    </lineage>
</organism>
<proteinExistence type="predicted"/>
<sequence>MPSCLDYAFAAAFHGTDLPGGRFWRPRACAPVFVWSEVACAVALSARIFFEARERLAAMPIGEGRPPYGRGTELYHAARRTVSSAARLWDALVALAASAAEEICVMAWGKLEPMPYLWDTRDATKIPVLGPKLMALFSAVADGATAIATEARNSLVGEAGHHHNTLPRQPPSMDMPVQARLSLMLGMEIVRCILALALPSASFNIPDDATESIEESVRIFGARLSLALAKDPIPDPVGKFEEEETYYLRCLRSIYEIENILSLAPRRQRLRDVPQTPNSPMCLPTVAPMC</sequence>
<organismHost>
    <name type="scientific">Amazona oratrix</name>
    <name type="common">yellow-headed parrot</name>
    <dbReference type="NCBI Taxonomy" id="152276"/>
</organismHost>
<protein>
    <recommendedName>
        <fullName>Uncharacterized protein sORF3/4</fullName>
    </recommendedName>
</protein>
<name>ORF3_PSHV1</name>
<reference key="1">
    <citation type="journal article" date="2006" name="J. Virol.">
        <title>Psittacid herpesvirus 1 and infectious laryngotracheitis virus: Comparative genome sequence analysis of two avian alphaherpesviruses.</title>
        <authorList>
            <person name="Thureen D.R."/>
            <person name="Keeler C.L. Jr."/>
        </authorList>
    </citation>
    <scope>NUCLEOTIDE SEQUENCE [LARGE SCALE GENOMIC DNA]</scope>
</reference>
<accession>Q6UDF3</accession>
<feature type="chain" id="PRO_0000406818" description="Uncharacterized protein sORF3/4">
    <location>
        <begin position="1"/>
        <end position="290"/>
    </location>
</feature>
<dbReference type="EMBL" id="AY372243">
    <property type="protein sequence ID" value="AAQ73757.1"/>
    <property type="molecule type" value="Genomic_DNA"/>
</dbReference>
<dbReference type="RefSeq" id="NP_944451.1">
    <property type="nucleotide sequence ID" value="NC_005264.1"/>
</dbReference>
<dbReference type="GeneID" id="4237766"/>
<dbReference type="KEGG" id="vg:4237766"/>
<dbReference type="Proteomes" id="UP000006840">
    <property type="component" value="Segment"/>
</dbReference>
<dbReference type="InterPro" id="IPR009823">
    <property type="entry name" value="Herpes_SORF3"/>
</dbReference>
<dbReference type="Pfam" id="PF07153">
    <property type="entry name" value="Marek_SORF3"/>
    <property type="match status" value="1"/>
</dbReference>